<comment type="function">
    <text evidence="1">ADP-ribosylhydrolase that specifically reverses the SirTM-mediated mono-ADP-ribosylation at an asparatate residue of GcvH-L, by releasing ADP-ribose from the target protein (By similarity). May play a role in the regulation of the response to host-induced oxidative stress (By similarity).</text>
</comment>
<comment type="catalytic activity">
    <reaction evidence="1">
        <text>4-O-(ADP-D-ribosyl)-L-aspartyl-[protein] + H2O = L-aspartyl-[protein] + ADP-D-ribose + H(+)</text>
        <dbReference type="Rhea" id="RHEA:54428"/>
        <dbReference type="Rhea" id="RHEA-COMP:9867"/>
        <dbReference type="Rhea" id="RHEA-COMP:13832"/>
        <dbReference type="ChEBI" id="CHEBI:15377"/>
        <dbReference type="ChEBI" id="CHEBI:15378"/>
        <dbReference type="ChEBI" id="CHEBI:29961"/>
        <dbReference type="ChEBI" id="CHEBI:57967"/>
        <dbReference type="ChEBI" id="CHEBI:138102"/>
    </reaction>
    <physiologicalReaction direction="left-to-right" evidence="1">
        <dbReference type="Rhea" id="RHEA:54429"/>
    </physiologicalReaction>
</comment>
<comment type="cofactor">
    <cofactor evidence="1">
        <name>Zn(2+)</name>
        <dbReference type="ChEBI" id="CHEBI:29105"/>
    </cofactor>
    <text evidence="1">Binds 1 Zn(2+) ion per subunit.</text>
</comment>
<comment type="similarity">
    <text evidence="3">Belongs to the MacroD-type family. Zn-Macro subfamily.</text>
</comment>
<sequence>MPSSFDLLGEMIGLLQTEQLTSSWACPLPNALTKRQDLWRALINQRPALPLSKDYLNLEDAYLDDWRASFVPVSVKDCQKTNYTSLFLYHGDIRYLAVDAIVNAANSELLGCFSPNHGCIDNAIHTFAGSRLRLACQAIMTEQGRKEAIGQAKLTSAYHLPASYIIHTVGPRITKGHHVSPIRADLLARCYRSSLDLAVKAGLTSLAFCSISTGEFGFPKKEAAQIAIKTVLKWQAEHPESKTLTTIFNTFTSEDKALYDTYLQKENNCE</sequence>
<dbReference type="EC" id="3.2.1.-" evidence="1"/>
<dbReference type="EMBL" id="AE004092">
    <property type="protein sequence ID" value="AAK34075.1"/>
    <property type="molecule type" value="Genomic_DNA"/>
</dbReference>
<dbReference type="EMBL" id="CP000017">
    <property type="protein sequence ID" value="AAZ51548.1"/>
    <property type="molecule type" value="Genomic_DNA"/>
</dbReference>
<dbReference type="RefSeq" id="NP_269354.1">
    <property type="nucleotide sequence ID" value="NC_002737.2"/>
</dbReference>
<dbReference type="SMR" id="Q99ZI6"/>
<dbReference type="PaxDb" id="1314-HKU360_00975"/>
<dbReference type="KEGG" id="spy:SPy_1216"/>
<dbReference type="KEGG" id="spz:M5005_Spy0930"/>
<dbReference type="PATRIC" id="fig|160490.10.peg.1062"/>
<dbReference type="HOGENOM" id="CLU_046550_2_1_9"/>
<dbReference type="OMA" id="QGEIILC"/>
<dbReference type="Proteomes" id="UP000000750">
    <property type="component" value="Chromosome"/>
</dbReference>
<dbReference type="GO" id="GO:0004649">
    <property type="term" value="F:poly(ADP-ribose) glycohydrolase activity"/>
    <property type="evidence" value="ECO:0000250"/>
    <property type="project" value="UniProtKB"/>
</dbReference>
<dbReference type="CDD" id="cd02908">
    <property type="entry name" value="Macro_OAADPr_deacetylase"/>
    <property type="match status" value="1"/>
</dbReference>
<dbReference type="FunFam" id="3.40.220.10:FF:000018">
    <property type="entry name" value="Protein-ADP-ribose hydrolase"/>
    <property type="match status" value="1"/>
</dbReference>
<dbReference type="Gene3D" id="3.40.220.10">
    <property type="entry name" value="Leucine Aminopeptidase, subunit E, domain 1"/>
    <property type="match status" value="1"/>
</dbReference>
<dbReference type="InterPro" id="IPR002589">
    <property type="entry name" value="Macro_dom"/>
</dbReference>
<dbReference type="InterPro" id="IPR043472">
    <property type="entry name" value="Macro_dom-like"/>
</dbReference>
<dbReference type="NCBIfam" id="NF003163">
    <property type="entry name" value="PRK04143.1"/>
    <property type="match status" value="1"/>
</dbReference>
<dbReference type="PANTHER" id="PTHR11106:SF121">
    <property type="entry name" value="ADP-RIBOSE 1''-PHOSPHATE PHOSPHATASE"/>
    <property type="match status" value="1"/>
</dbReference>
<dbReference type="PANTHER" id="PTHR11106">
    <property type="entry name" value="GANGLIOSIDE INDUCED DIFFERENTIATION ASSOCIATED PROTEIN 2-RELATED"/>
    <property type="match status" value="1"/>
</dbReference>
<dbReference type="Pfam" id="PF01661">
    <property type="entry name" value="Macro"/>
    <property type="match status" value="1"/>
</dbReference>
<dbReference type="SMART" id="SM00506">
    <property type="entry name" value="A1pp"/>
    <property type="match status" value="1"/>
</dbReference>
<dbReference type="SUPFAM" id="SSF52949">
    <property type="entry name" value="Macro domain-like"/>
    <property type="match status" value="1"/>
</dbReference>
<dbReference type="PROSITE" id="PS51154">
    <property type="entry name" value="MACRO"/>
    <property type="match status" value="1"/>
</dbReference>
<gene>
    <name type="ordered locus">SPy_1216</name>
    <name type="ordered locus">M5005_Spy0930</name>
</gene>
<name>ADPRH_STRP1</name>
<keyword id="KW-0326">Glycosidase</keyword>
<keyword id="KW-0378">Hydrolase</keyword>
<keyword id="KW-0479">Metal-binding</keyword>
<keyword id="KW-1185">Reference proteome</keyword>
<keyword id="KW-0862">Zinc</keyword>
<proteinExistence type="inferred from homology"/>
<accession>Q99ZI6</accession>
<accession>Q48YM4</accession>
<evidence type="ECO:0000250" key="1">
    <source>
        <dbReference type="UniProtKB" id="P0DN70"/>
    </source>
</evidence>
<evidence type="ECO:0000255" key="2">
    <source>
        <dbReference type="PROSITE-ProRule" id="PRU00490"/>
    </source>
</evidence>
<evidence type="ECO:0000305" key="3"/>
<protein>
    <recommendedName>
        <fullName evidence="1">Protein-ADP-ribose hydrolase</fullName>
        <ecNumber evidence="1">3.2.1.-</ecNumber>
    </recommendedName>
</protein>
<reference key="1">
    <citation type="journal article" date="2001" name="Proc. Natl. Acad. Sci. U.S.A.">
        <title>Complete genome sequence of an M1 strain of Streptococcus pyogenes.</title>
        <authorList>
            <person name="Ferretti J.J."/>
            <person name="McShan W.M."/>
            <person name="Ajdic D.J."/>
            <person name="Savic D.J."/>
            <person name="Savic G."/>
            <person name="Lyon K."/>
            <person name="Primeaux C."/>
            <person name="Sezate S."/>
            <person name="Suvorov A.N."/>
            <person name="Kenton S."/>
            <person name="Lai H.S."/>
            <person name="Lin S.P."/>
            <person name="Qian Y."/>
            <person name="Jia H.G."/>
            <person name="Najar F.Z."/>
            <person name="Ren Q."/>
            <person name="Zhu H."/>
            <person name="Song L."/>
            <person name="White J."/>
            <person name="Yuan X."/>
            <person name="Clifton S.W."/>
            <person name="Roe B.A."/>
            <person name="McLaughlin R.E."/>
        </authorList>
    </citation>
    <scope>NUCLEOTIDE SEQUENCE [LARGE SCALE GENOMIC DNA]</scope>
    <source>
        <strain>ATCC 700294 / SF370 / Serotype M1</strain>
    </source>
</reference>
<reference key="2">
    <citation type="journal article" date="2005" name="J. Infect. Dis.">
        <title>Evolutionary origin and emergence of a highly successful clone of serotype M1 group A Streptococcus involved multiple horizontal gene transfer events.</title>
        <authorList>
            <person name="Sumby P."/>
            <person name="Porcella S.F."/>
            <person name="Madrigal A.G."/>
            <person name="Barbian K.D."/>
            <person name="Virtaneva K."/>
            <person name="Ricklefs S.M."/>
            <person name="Sturdevant D.E."/>
            <person name="Graham M.R."/>
            <person name="Vuopio-Varkila J."/>
            <person name="Hoe N.P."/>
            <person name="Musser J.M."/>
        </authorList>
    </citation>
    <scope>NUCLEOTIDE SEQUENCE [LARGE SCALE GENOMIC DNA]</scope>
    <source>
        <strain>ATCC BAA-947 / MGAS5005 / Serotype M1</strain>
    </source>
</reference>
<feature type="chain" id="PRO_0000089217" description="Protein-ADP-ribose hydrolase">
    <location>
        <begin position="1"/>
        <end position="270"/>
    </location>
</feature>
<feature type="domain" description="Macro" evidence="2">
    <location>
        <begin position="73"/>
        <end position="267"/>
    </location>
</feature>
<feature type="binding site" evidence="1">
    <location>
        <position position="92"/>
    </location>
    <ligand>
        <name>ADP-D-ribose</name>
        <dbReference type="ChEBI" id="CHEBI:57967"/>
    </ligand>
</feature>
<feature type="binding site" evidence="1">
    <location>
        <position position="93"/>
    </location>
    <ligand>
        <name>ADP-D-ribose</name>
        <dbReference type="ChEBI" id="CHEBI:57967"/>
    </ligand>
</feature>
<feature type="binding site" evidence="1">
    <location>
        <position position="106"/>
    </location>
    <ligand>
        <name>ADP-D-ribose</name>
        <dbReference type="ChEBI" id="CHEBI:57967"/>
    </ligand>
</feature>
<feature type="binding site" evidence="1">
    <location>
        <position position="112"/>
    </location>
    <ligand>
        <name>Zn(2+)</name>
        <dbReference type="ChEBI" id="CHEBI:29105"/>
    </ligand>
</feature>
<feature type="binding site" evidence="1">
    <location>
        <position position="117"/>
    </location>
    <ligand>
        <name>Zn(2+)</name>
        <dbReference type="ChEBI" id="CHEBI:29105"/>
    </ligand>
</feature>
<feature type="binding site" evidence="1">
    <location>
        <position position="119"/>
    </location>
    <ligand>
        <name>ADP-D-ribose</name>
        <dbReference type="ChEBI" id="CHEBI:57967"/>
    </ligand>
</feature>
<feature type="binding site" evidence="1">
    <location>
        <position position="119"/>
    </location>
    <ligand>
        <name>Zn(2+)</name>
        <dbReference type="ChEBI" id="CHEBI:29105"/>
    </ligand>
</feature>
<feature type="binding site" evidence="1">
    <location>
        <position position="120"/>
    </location>
    <ligand>
        <name>ADP-D-ribose</name>
        <dbReference type="ChEBI" id="CHEBI:57967"/>
    </ligand>
</feature>
<feature type="binding site" evidence="1">
    <location>
        <position position="121"/>
    </location>
    <ligand>
        <name>ADP-D-ribose</name>
        <dbReference type="ChEBI" id="CHEBI:57967"/>
    </ligand>
</feature>
<feature type="binding site" evidence="1">
    <location>
        <position position="212"/>
    </location>
    <ligand>
        <name>ADP-D-ribose</name>
        <dbReference type="ChEBI" id="CHEBI:57967"/>
    </ligand>
</feature>
<feature type="binding site" evidence="1">
    <location>
        <position position="213"/>
    </location>
    <ligand>
        <name>ADP-D-ribose</name>
        <dbReference type="ChEBI" id="CHEBI:57967"/>
    </ligand>
</feature>
<feature type="binding site" evidence="1">
    <location>
        <position position="214"/>
    </location>
    <ligand>
        <name>ADP-D-ribose</name>
        <dbReference type="ChEBI" id="CHEBI:57967"/>
    </ligand>
</feature>
<feature type="binding site" evidence="1">
    <location>
        <position position="215"/>
    </location>
    <ligand>
        <name>ADP-D-ribose</name>
        <dbReference type="ChEBI" id="CHEBI:57967"/>
    </ligand>
</feature>
<feature type="binding site" evidence="1">
    <location>
        <position position="216"/>
    </location>
    <ligand>
        <name>ADP-D-ribose</name>
        <dbReference type="ChEBI" id="CHEBI:57967"/>
    </ligand>
</feature>
<organism>
    <name type="scientific">Streptococcus pyogenes serotype M1</name>
    <dbReference type="NCBI Taxonomy" id="301447"/>
    <lineage>
        <taxon>Bacteria</taxon>
        <taxon>Bacillati</taxon>
        <taxon>Bacillota</taxon>
        <taxon>Bacilli</taxon>
        <taxon>Lactobacillales</taxon>
        <taxon>Streptococcaceae</taxon>
        <taxon>Streptococcus</taxon>
    </lineage>
</organism>